<gene>
    <name evidence="1" type="primary">rnc</name>
    <name type="ordered locus">CGSHiGG_02530</name>
</gene>
<accession>A5UFI8</accession>
<name>RNC_HAEIG</name>
<proteinExistence type="inferred from homology"/>
<evidence type="ECO:0000255" key="1">
    <source>
        <dbReference type="HAMAP-Rule" id="MF_00104"/>
    </source>
</evidence>
<comment type="function">
    <text evidence="1">Digests double-stranded RNA. Involved in the processing of primary rRNA transcript to yield the immediate precursors to the large and small rRNAs (23S and 16S). Processes some mRNAs, and tRNAs when they are encoded in the rRNA operon. Processes pre-crRNA and tracrRNA of type II CRISPR loci if present in the organism.</text>
</comment>
<comment type="catalytic activity">
    <reaction evidence="1">
        <text>Endonucleolytic cleavage to 5'-phosphomonoester.</text>
        <dbReference type="EC" id="3.1.26.3"/>
    </reaction>
</comment>
<comment type="cofactor">
    <cofactor evidence="1">
        <name>Mg(2+)</name>
        <dbReference type="ChEBI" id="CHEBI:18420"/>
    </cofactor>
</comment>
<comment type="subunit">
    <text evidence="1">Homodimer.</text>
</comment>
<comment type="subcellular location">
    <subcellularLocation>
        <location evidence="1">Cytoplasm</location>
    </subcellularLocation>
</comment>
<comment type="similarity">
    <text evidence="1">Belongs to the ribonuclease III family.</text>
</comment>
<reference key="1">
    <citation type="journal article" date="2007" name="Genome Biol.">
        <title>Characterization and modeling of the Haemophilus influenzae core and supragenomes based on the complete genomic sequences of Rd and 12 clinical nontypeable strains.</title>
        <authorList>
            <person name="Hogg J.S."/>
            <person name="Hu F.Z."/>
            <person name="Janto B."/>
            <person name="Boissy R."/>
            <person name="Hayes J."/>
            <person name="Keefe R."/>
            <person name="Post J.C."/>
            <person name="Ehrlich G.D."/>
        </authorList>
    </citation>
    <scope>NUCLEOTIDE SEQUENCE [LARGE SCALE GENOMIC DNA]</scope>
    <source>
        <strain>PittGG</strain>
    </source>
</reference>
<dbReference type="EC" id="3.1.26.3" evidence="1"/>
<dbReference type="EMBL" id="CP000672">
    <property type="protein sequence ID" value="ABQ99543.1"/>
    <property type="molecule type" value="Genomic_DNA"/>
</dbReference>
<dbReference type="SMR" id="A5UFI8"/>
<dbReference type="KEGG" id="hiq:CGSHiGG_02530"/>
<dbReference type="HOGENOM" id="CLU_000907_1_1_6"/>
<dbReference type="Proteomes" id="UP000001990">
    <property type="component" value="Chromosome"/>
</dbReference>
<dbReference type="GO" id="GO:0005737">
    <property type="term" value="C:cytoplasm"/>
    <property type="evidence" value="ECO:0007669"/>
    <property type="project" value="UniProtKB-SubCell"/>
</dbReference>
<dbReference type="GO" id="GO:0003725">
    <property type="term" value="F:double-stranded RNA binding"/>
    <property type="evidence" value="ECO:0007669"/>
    <property type="project" value="TreeGrafter"/>
</dbReference>
<dbReference type="GO" id="GO:0046872">
    <property type="term" value="F:metal ion binding"/>
    <property type="evidence" value="ECO:0007669"/>
    <property type="project" value="UniProtKB-KW"/>
</dbReference>
<dbReference type="GO" id="GO:0004525">
    <property type="term" value="F:ribonuclease III activity"/>
    <property type="evidence" value="ECO:0007669"/>
    <property type="project" value="UniProtKB-UniRule"/>
</dbReference>
<dbReference type="GO" id="GO:0019843">
    <property type="term" value="F:rRNA binding"/>
    <property type="evidence" value="ECO:0007669"/>
    <property type="project" value="UniProtKB-KW"/>
</dbReference>
<dbReference type="GO" id="GO:0006397">
    <property type="term" value="P:mRNA processing"/>
    <property type="evidence" value="ECO:0007669"/>
    <property type="project" value="UniProtKB-UniRule"/>
</dbReference>
<dbReference type="GO" id="GO:0010468">
    <property type="term" value="P:regulation of gene expression"/>
    <property type="evidence" value="ECO:0007669"/>
    <property type="project" value="TreeGrafter"/>
</dbReference>
<dbReference type="GO" id="GO:0006364">
    <property type="term" value="P:rRNA processing"/>
    <property type="evidence" value="ECO:0007669"/>
    <property type="project" value="UniProtKB-UniRule"/>
</dbReference>
<dbReference type="GO" id="GO:0008033">
    <property type="term" value="P:tRNA processing"/>
    <property type="evidence" value="ECO:0007669"/>
    <property type="project" value="UniProtKB-KW"/>
</dbReference>
<dbReference type="CDD" id="cd10845">
    <property type="entry name" value="DSRM_RNAse_III_family"/>
    <property type="match status" value="1"/>
</dbReference>
<dbReference type="CDD" id="cd00593">
    <property type="entry name" value="RIBOc"/>
    <property type="match status" value="1"/>
</dbReference>
<dbReference type="FunFam" id="1.10.1520.10:FF:000001">
    <property type="entry name" value="Ribonuclease 3"/>
    <property type="match status" value="1"/>
</dbReference>
<dbReference type="FunFam" id="3.30.160.20:FF:000003">
    <property type="entry name" value="Ribonuclease 3"/>
    <property type="match status" value="1"/>
</dbReference>
<dbReference type="Gene3D" id="3.30.160.20">
    <property type="match status" value="1"/>
</dbReference>
<dbReference type="Gene3D" id="1.10.1520.10">
    <property type="entry name" value="Ribonuclease III domain"/>
    <property type="match status" value="1"/>
</dbReference>
<dbReference type="HAMAP" id="MF_00104">
    <property type="entry name" value="RNase_III"/>
    <property type="match status" value="1"/>
</dbReference>
<dbReference type="InterPro" id="IPR014720">
    <property type="entry name" value="dsRBD_dom"/>
</dbReference>
<dbReference type="InterPro" id="IPR011907">
    <property type="entry name" value="RNase_III"/>
</dbReference>
<dbReference type="InterPro" id="IPR000999">
    <property type="entry name" value="RNase_III_dom"/>
</dbReference>
<dbReference type="InterPro" id="IPR036389">
    <property type="entry name" value="RNase_III_sf"/>
</dbReference>
<dbReference type="NCBIfam" id="TIGR02191">
    <property type="entry name" value="RNaseIII"/>
    <property type="match status" value="1"/>
</dbReference>
<dbReference type="PANTHER" id="PTHR11207:SF0">
    <property type="entry name" value="RIBONUCLEASE 3"/>
    <property type="match status" value="1"/>
</dbReference>
<dbReference type="PANTHER" id="PTHR11207">
    <property type="entry name" value="RIBONUCLEASE III"/>
    <property type="match status" value="1"/>
</dbReference>
<dbReference type="Pfam" id="PF00035">
    <property type="entry name" value="dsrm"/>
    <property type="match status" value="1"/>
</dbReference>
<dbReference type="Pfam" id="PF14622">
    <property type="entry name" value="Ribonucleas_3_3"/>
    <property type="match status" value="1"/>
</dbReference>
<dbReference type="SMART" id="SM00358">
    <property type="entry name" value="DSRM"/>
    <property type="match status" value="1"/>
</dbReference>
<dbReference type="SMART" id="SM00535">
    <property type="entry name" value="RIBOc"/>
    <property type="match status" value="1"/>
</dbReference>
<dbReference type="SUPFAM" id="SSF54768">
    <property type="entry name" value="dsRNA-binding domain-like"/>
    <property type="match status" value="1"/>
</dbReference>
<dbReference type="SUPFAM" id="SSF69065">
    <property type="entry name" value="RNase III domain-like"/>
    <property type="match status" value="1"/>
</dbReference>
<dbReference type="PROSITE" id="PS50137">
    <property type="entry name" value="DS_RBD"/>
    <property type="match status" value="1"/>
</dbReference>
<dbReference type="PROSITE" id="PS00517">
    <property type="entry name" value="RNASE_3_1"/>
    <property type="match status" value="1"/>
</dbReference>
<dbReference type="PROSITE" id="PS50142">
    <property type="entry name" value="RNASE_3_2"/>
    <property type="match status" value="1"/>
</dbReference>
<feature type="chain" id="PRO_1000075762" description="Ribonuclease 3">
    <location>
        <begin position="1"/>
        <end position="227"/>
    </location>
</feature>
<feature type="domain" description="RNase III" evidence="1">
    <location>
        <begin position="4"/>
        <end position="126"/>
    </location>
</feature>
<feature type="domain" description="DRBM" evidence="1">
    <location>
        <begin position="153"/>
        <end position="226"/>
    </location>
</feature>
<feature type="active site" evidence="1">
    <location>
        <position position="43"/>
    </location>
</feature>
<feature type="active site" evidence="1">
    <location>
        <position position="115"/>
    </location>
</feature>
<feature type="binding site" evidence="1">
    <location>
        <position position="39"/>
    </location>
    <ligand>
        <name>Mg(2+)</name>
        <dbReference type="ChEBI" id="CHEBI:18420"/>
    </ligand>
</feature>
<feature type="binding site" evidence="1">
    <location>
        <position position="112"/>
    </location>
    <ligand>
        <name>Mg(2+)</name>
        <dbReference type="ChEBI" id="CHEBI:18420"/>
    </ligand>
</feature>
<feature type="binding site" evidence="1">
    <location>
        <position position="115"/>
    </location>
    <ligand>
        <name>Mg(2+)</name>
        <dbReference type="ChEBI" id="CHEBI:18420"/>
    </ligand>
</feature>
<keyword id="KW-0963">Cytoplasm</keyword>
<keyword id="KW-0255">Endonuclease</keyword>
<keyword id="KW-0378">Hydrolase</keyword>
<keyword id="KW-0460">Magnesium</keyword>
<keyword id="KW-0479">Metal-binding</keyword>
<keyword id="KW-0507">mRNA processing</keyword>
<keyword id="KW-0540">Nuclease</keyword>
<keyword id="KW-0694">RNA-binding</keyword>
<keyword id="KW-0698">rRNA processing</keyword>
<keyword id="KW-0699">rRNA-binding</keyword>
<keyword id="KW-0819">tRNA processing</keyword>
<sequence length="227" mass="25656">MNHLDRLERKIGYRFNDIALLKQALTHRSAATQHNERLEFLGDSILNFTIAEALYHQFPRCNEGELSRMRATLVREPTLAILARQFELGDYMSLGSGELKNGGFRRESILADCVEAIIGAMSLDQGLAVTTQVIRNWYQQLLAEIKPGDNQKDAKTRLQEYLQGKHLPLPTYEVVNIQGEAHCQIFTVECKVKSAGKIDRTFVAKGSSRRKAEQAAAEQILKELDIK</sequence>
<protein>
    <recommendedName>
        <fullName evidence="1">Ribonuclease 3</fullName>
        <ecNumber evidence="1">3.1.26.3</ecNumber>
    </recommendedName>
    <alternativeName>
        <fullName evidence="1">Ribonuclease III</fullName>
        <shortName evidence="1">RNase III</shortName>
    </alternativeName>
</protein>
<organism>
    <name type="scientific">Haemophilus influenzae (strain PittGG)</name>
    <dbReference type="NCBI Taxonomy" id="374931"/>
    <lineage>
        <taxon>Bacteria</taxon>
        <taxon>Pseudomonadati</taxon>
        <taxon>Pseudomonadota</taxon>
        <taxon>Gammaproteobacteria</taxon>
        <taxon>Pasteurellales</taxon>
        <taxon>Pasteurellaceae</taxon>
        <taxon>Haemophilus</taxon>
    </lineage>
</organism>